<organism>
    <name type="scientific">Rhodopseudomonas palustris (strain TIE-1)</name>
    <dbReference type="NCBI Taxonomy" id="395960"/>
    <lineage>
        <taxon>Bacteria</taxon>
        <taxon>Pseudomonadati</taxon>
        <taxon>Pseudomonadota</taxon>
        <taxon>Alphaproteobacteria</taxon>
        <taxon>Hyphomicrobiales</taxon>
        <taxon>Nitrobacteraceae</taxon>
        <taxon>Rhodopseudomonas</taxon>
    </lineage>
</organism>
<dbReference type="EC" id="4.2.1.33" evidence="1"/>
<dbReference type="EMBL" id="CP001096">
    <property type="protein sequence ID" value="ACE98800.1"/>
    <property type="molecule type" value="Genomic_DNA"/>
</dbReference>
<dbReference type="RefSeq" id="WP_012494004.1">
    <property type="nucleotide sequence ID" value="NC_011004.1"/>
</dbReference>
<dbReference type="SMR" id="B3Q851"/>
<dbReference type="KEGG" id="rpt:Rpal_0240"/>
<dbReference type="HOGENOM" id="CLU_006714_3_4_5"/>
<dbReference type="OrthoDB" id="9802769at2"/>
<dbReference type="UniPathway" id="UPA00048">
    <property type="reaction ID" value="UER00071"/>
</dbReference>
<dbReference type="Proteomes" id="UP000001725">
    <property type="component" value="Chromosome"/>
</dbReference>
<dbReference type="GO" id="GO:0003861">
    <property type="term" value="F:3-isopropylmalate dehydratase activity"/>
    <property type="evidence" value="ECO:0007669"/>
    <property type="project" value="UniProtKB-UniRule"/>
</dbReference>
<dbReference type="GO" id="GO:0051539">
    <property type="term" value="F:4 iron, 4 sulfur cluster binding"/>
    <property type="evidence" value="ECO:0007669"/>
    <property type="project" value="UniProtKB-KW"/>
</dbReference>
<dbReference type="GO" id="GO:0046872">
    <property type="term" value="F:metal ion binding"/>
    <property type="evidence" value="ECO:0007669"/>
    <property type="project" value="UniProtKB-KW"/>
</dbReference>
<dbReference type="GO" id="GO:0009098">
    <property type="term" value="P:L-leucine biosynthetic process"/>
    <property type="evidence" value="ECO:0007669"/>
    <property type="project" value="UniProtKB-UniRule"/>
</dbReference>
<dbReference type="CDD" id="cd01583">
    <property type="entry name" value="IPMI"/>
    <property type="match status" value="1"/>
</dbReference>
<dbReference type="FunFam" id="3.30.499.10:FF:000007">
    <property type="entry name" value="3-isopropylmalate dehydratase large subunit"/>
    <property type="match status" value="1"/>
</dbReference>
<dbReference type="Gene3D" id="3.30.499.10">
    <property type="entry name" value="Aconitase, domain 3"/>
    <property type="match status" value="2"/>
</dbReference>
<dbReference type="HAMAP" id="MF_01026">
    <property type="entry name" value="LeuC_type1"/>
    <property type="match status" value="1"/>
</dbReference>
<dbReference type="InterPro" id="IPR004430">
    <property type="entry name" value="3-IsopropMal_deHydase_lsu"/>
</dbReference>
<dbReference type="InterPro" id="IPR015931">
    <property type="entry name" value="Acnase/IPM_dHydase_lsu_aba_1/3"/>
</dbReference>
<dbReference type="InterPro" id="IPR001030">
    <property type="entry name" value="Acoase/IPM_deHydtase_lsu_aba"/>
</dbReference>
<dbReference type="InterPro" id="IPR018136">
    <property type="entry name" value="Aconitase_4Fe-4S_BS"/>
</dbReference>
<dbReference type="InterPro" id="IPR036008">
    <property type="entry name" value="Aconitase_4Fe-4S_dom"/>
</dbReference>
<dbReference type="InterPro" id="IPR050067">
    <property type="entry name" value="IPM_dehydratase_rel_enz"/>
</dbReference>
<dbReference type="InterPro" id="IPR033941">
    <property type="entry name" value="IPMI_cat"/>
</dbReference>
<dbReference type="NCBIfam" id="TIGR00170">
    <property type="entry name" value="leuC"/>
    <property type="match status" value="1"/>
</dbReference>
<dbReference type="NCBIfam" id="NF004016">
    <property type="entry name" value="PRK05478.1"/>
    <property type="match status" value="1"/>
</dbReference>
<dbReference type="NCBIfam" id="NF009116">
    <property type="entry name" value="PRK12466.1"/>
    <property type="match status" value="1"/>
</dbReference>
<dbReference type="PANTHER" id="PTHR43822:SF9">
    <property type="entry name" value="3-ISOPROPYLMALATE DEHYDRATASE"/>
    <property type="match status" value="1"/>
</dbReference>
<dbReference type="PANTHER" id="PTHR43822">
    <property type="entry name" value="HOMOACONITASE, MITOCHONDRIAL-RELATED"/>
    <property type="match status" value="1"/>
</dbReference>
<dbReference type="Pfam" id="PF00330">
    <property type="entry name" value="Aconitase"/>
    <property type="match status" value="1"/>
</dbReference>
<dbReference type="PRINTS" id="PR00415">
    <property type="entry name" value="ACONITASE"/>
</dbReference>
<dbReference type="SUPFAM" id="SSF53732">
    <property type="entry name" value="Aconitase iron-sulfur domain"/>
    <property type="match status" value="1"/>
</dbReference>
<dbReference type="PROSITE" id="PS00450">
    <property type="entry name" value="ACONITASE_1"/>
    <property type="match status" value="1"/>
</dbReference>
<dbReference type="PROSITE" id="PS01244">
    <property type="entry name" value="ACONITASE_2"/>
    <property type="match status" value="1"/>
</dbReference>
<feature type="chain" id="PRO_1000135710" description="3-isopropylmalate dehydratase large subunit">
    <location>
        <begin position="1"/>
        <end position="469"/>
    </location>
</feature>
<feature type="binding site" evidence="1">
    <location>
        <position position="350"/>
    </location>
    <ligand>
        <name>[4Fe-4S] cluster</name>
        <dbReference type="ChEBI" id="CHEBI:49883"/>
    </ligand>
</feature>
<feature type="binding site" evidence="1">
    <location>
        <position position="410"/>
    </location>
    <ligand>
        <name>[4Fe-4S] cluster</name>
        <dbReference type="ChEBI" id="CHEBI:49883"/>
    </ligand>
</feature>
<feature type="binding site" evidence="1">
    <location>
        <position position="413"/>
    </location>
    <ligand>
        <name>[4Fe-4S] cluster</name>
        <dbReference type="ChEBI" id="CHEBI:49883"/>
    </ligand>
</feature>
<name>LEUC_RHOPT</name>
<comment type="function">
    <text evidence="1">Catalyzes the isomerization between 2-isopropylmalate and 3-isopropylmalate, via the formation of 2-isopropylmaleate.</text>
</comment>
<comment type="catalytic activity">
    <reaction evidence="1">
        <text>(2R,3S)-3-isopropylmalate = (2S)-2-isopropylmalate</text>
        <dbReference type="Rhea" id="RHEA:32287"/>
        <dbReference type="ChEBI" id="CHEBI:1178"/>
        <dbReference type="ChEBI" id="CHEBI:35121"/>
        <dbReference type="EC" id="4.2.1.33"/>
    </reaction>
</comment>
<comment type="cofactor">
    <cofactor evidence="1">
        <name>[4Fe-4S] cluster</name>
        <dbReference type="ChEBI" id="CHEBI:49883"/>
    </cofactor>
    <text evidence="1">Binds 1 [4Fe-4S] cluster per subunit.</text>
</comment>
<comment type="pathway">
    <text evidence="1">Amino-acid biosynthesis; L-leucine biosynthesis; L-leucine from 3-methyl-2-oxobutanoate: step 2/4.</text>
</comment>
<comment type="subunit">
    <text evidence="1">Heterodimer of LeuC and LeuD.</text>
</comment>
<comment type="similarity">
    <text evidence="1">Belongs to the aconitase/IPM isomerase family. LeuC type 1 subfamily.</text>
</comment>
<sequence length="469" mass="50464">MSAKPTTLYDKIWNDHLVHEAEDGTCLLYIDRHLVHEVTSPQAFEGLRTAGRKVHAPEKTLAVVDHNVPTTDRSKPNPDPESAEQIAALAENARDFGITYYNEFDKRQGVVHVIGPEQGFTLPGTTIVCGDSHTSTHGAFGALAHGIGTSEVEHVLATQTLIQKKAKNMRVTVDGQLPDGVTAKDVILAIIGEIGTAGGTGYVLEYAGDAIRSLSMEGRMTVCNMSIEGGARAGLIAPDAKAYEFLKGRPLAPKGEAWDAALRYWETLRSDDGAHFDHELKLDAAALPPIVTWGTSPEDVISVTGRVPNPADIADEAKRLSKERALAYMGLTPGTKITDIKIDRMFIGSCTNGRIEDLRAAAKVAEGKTVNANVNAIIVPGSGLVKEQAEAEGLDKIFIKAGFEWREPGCSMCLAMNPDKLAPEERCASTSNRNFEGRQGFKGRTHLVSPAMAAAAAIAGHFVDIRDWH</sequence>
<reference key="1">
    <citation type="submission" date="2008-05" db="EMBL/GenBank/DDBJ databases">
        <title>Complete sequence of Rhodopseudomonas palustris TIE-1.</title>
        <authorList>
            <consortium name="US DOE Joint Genome Institute"/>
            <person name="Lucas S."/>
            <person name="Copeland A."/>
            <person name="Lapidus A."/>
            <person name="Glavina del Rio T."/>
            <person name="Dalin E."/>
            <person name="Tice H."/>
            <person name="Pitluck S."/>
            <person name="Chain P."/>
            <person name="Malfatti S."/>
            <person name="Shin M."/>
            <person name="Vergez L."/>
            <person name="Lang D."/>
            <person name="Schmutz J."/>
            <person name="Larimer F."/>
            <person name="Land M."/>
            <person name="Hauser L."/>
            <person name="Kyrpides N."/>
            <person name="Mikhailova N."/>
            <person name="Emerson D."/>
            <person name="Newman D.K."/>
            <person name="Roden E."/>
            <person name="Richardson P."/>
        </authorList>
    </citation>
    <scope>NUCLEOTIDE SEQUENCE [LARGE SCALE GENOMIC DNA]</scope>
    <source>
        <strain>TIE-1</strain>
    </source>
</reference>
<proteinExistence type="inferred from homology"/>
<accession>B3Q851</accession>
<gene>
    <name evidence="1" type="primary">leuC</name>
    <name type="ordered locus">Rpal_0240</name>
</gene>
<protein>
    <recommendedName>
        <fullName evidence="1">3-isopropylmalate dehydratase large subunit</fullName>
        <ecNumber evidence="1">4.2.1.33</ecNumber>
    </recommendedName>
    <alternativeName>
        <fullName evidence="1">Alpha-IPM isomerase</fullName>
        <shortName evidence="1">IPMI</shortName>
    </alternativeName>
    <alternativeName>
        <fullName evidence="1">Isopropylmalate isomerase</fullName>
    </alternativeName>
</protein>
<keyword id="KW-0004">4Fe-4S</keyword>
<keyword id="KW-0028">Amino-acid biosynthesis</keyword>
<keyword id="KW-0100">Branched-chain amino acid biosynthesis</keyword>
<keyword id="KW-0408">Iron</keyword>
<keyword id="KW-0411">Iron-sulfur</keyword>
<keyword id="KW-0432">Leucine biosynthesis</keyword>
<keyword id="KW-0456">Lyase</keyword>
<keyword id="KW-0479">Metal-binding</keyword>
<evidence type="ECO:0000255" key="1">
    <source>
        <dbReference type="HAMAP-Rule" id="MF_01026"/>
    </source>
</evidence>